<feature type="chain" id="PRO_0000048000" description="DNA-directed RNA polymerase subunit beta">
    <location>
        <begin position="1"/>
        <end position="1388"/>
    </location>
</feature>
<sequence length="1388" mass="154782">MKDLMTSYSFTEKKRIRKDFGKHRSILKVPFLLAIQVDSYRAFLQGDVESSQRKDIGLHAALKSVFPIVSYSGNAALEYVGYKLGEPMFDERECRQRGMSYGAPLRVTVRLVIYDRESSTKAVKYIKEQEVYLGEIPLMTENGTFIVNGTERVIVSQLHRSPGVFFDHDRGKTHSSGKLLYSARIIPCRGSWLDFEFDPKDALFTRIDRRRKLPVSILLRALGYSNEEILGEFFEINTFHINPDKGVQLELVPERLRGEILSFNLTDGGGVIVEAGKRITARHVKQLEASGISALAVPDEYLIGRILSHDVIDATTGELLASANSEVNEDRIVAFRKAGIDSVGTLWVNDLDRGAYLSNTLRIDPTRTQLEAQVEIYRMMRPGEPPTKEAAQNLFHNLFFTFDRYDLSMVGRMKFNRRVGRKEVAGEPVLYDKKYFSDRNDEESRRLVSKLGETSDILDVIKGLCEIRNGRGVVDDIDHLGNRRVRSVGEMAENVFRVGLVRVERAVKERLSMAESEGLTPQELINAKPVAAAIKEFFGSSQLSQFMDQNNPLSEVTHKRRLSALGPGGLTRERAGFEVRDVHLSHYGCLCTIETPEGPNIGLINSLAVFARTNQYGFLETPYRKVVEGRVTDEVEYLSAIEENQYVIAQANTLTDDNGQLTESFVPCRFQGESLLKPPSYVHYMDVSPMQTVSVAAALVPFLEHDDANRALMGANMQRQAVPTLRAQKPLVGTGIERTVARDSGVTVNARRGGVIDQVDAGRIVVKVNESEIIGATDAGVDIYGLIKYTRSNQNTCINQRPLVNVGDIVTSGDVLADGPSTDIGELALGQNMLIAFMPWNGYNFEDSILLSERVVEEDRYTTIHIEELTCIARDTKLGSEEISADIPNVSEQALNRLDESGVVYIGAEVRAGDILVGKVTPKGESQLTPEEKLLRAIFGEKASDVKDSSLRVPPGMDGTVIDVQVFTRDGIEKDKRAHQIEEYEIKRVKKDFDDQFRILEGAIYARLRSQIVGKVVNSGVDIKKGEVITGAYLDGLKKSDWFALRMKDEVAVEAIDRAQKQIQAYQKEFDQRFSDKRSKITQGDDLAPGVLKMVKVFLAVKRCIQPGDKMAGRHGNKGVVSNVVPVEDMPFMEDGTPVDIVLNPLGVPSRMNIGQILEVHLGWAAKGLGHRIQRMLEANAAIADLRKFLNEIYNHDKSVVGERVDLSQFSDDELLNMAKNLTDGVPMASPVFDGASEQEIKRMLDLAELPTGGQTQLYDGHTGEPFDRKTTVGYMHYLKLNHLVDDKMHARSTGPYSLVTQQPLGGKAQFGGQRFGEMEVWALEAYGAAYTLQEMLTVKSDDVQGRNQMYKNIVDGDHQMVAGMPESFNVLVKEIRSLAINIELEDN</sequence>
<accession>Q9PA86</accession>
<proteinExistence type="inferred from homology"/>
<reference key="1">
    <citation type="journal article" date="2000" name="Nature">
        <title>The genome sequence of the plant pathogen Xylella fastidiosa.</title>
        <authorList>
            <person name="Simpson A.J.G."/>
            <person name="Reinach F.C."/>
            <person name="Arruda P."/>
            <person name="Abreu F.A."/>
            <person name="Acencio M."/>
            <person name="Alvarenga R."/>
            <person name="Alves L.M.C."/>
            <person name="Araya J.E."/>
            <person name="Baia G.S."/>
            <person name="Baptista C.S."/>
            <person name="Barros M.H."/>
            <person name="Bonaccorsi E.D."/>
            <person name="Bordin S."/>
            <person name="Bove J.M."/>
            <person name="Briones M.R.S."/>
            <person name="Bueno M.R.P."/>
            <person name="Camargo A.A."/>
            <person name="Camargo L.E.A."/>
            <person name="Carraro D.M."/>
            <person name="Carrer H."/>
            <person name="Colauto N.B."/>
            <person name="Colombo C."/>
            <person name="Costa F.F."/>
            <person name="Costa M.C.R."/>
            <person name="Costa-Neto C.M."/>
            <person name="Coutinho L.L."/>
            <person name="Cristofani M."/>
            <person name="Dias-Neto E."/>
            <person name="Docena C."/>
            <person name="El-Dorry H."/>
            <person name="Facincani A.P."/>
            <person name="Ferreira A.J.S."/>
            <person name="Ferreira V.C.A."/>
            <person name="Ferro J.A."/>
            <person name="Fraga J.S."/>
            <person name="Franca S.C."/>
            <person name="Franco M.C."/>
            <person name="Frohme M."/>
            <person name="Furlan L.R."/>
            <person name="Garnier M."/>
            <person name="Goldman G.H."/>
            <person name="Goldman M.H.S."/>
            <person name="Gomes S.L."/>
            <person name="Gruber A."/>
            <person name="Ho P.L."/>
            <person name="Hoheisel J.D."/>
            <person name="Junqueira M.L."/>
            <person name="Kemper E.L."/>
            <person name="Kitajima J.P."/>
            <person name="Krieger J.E."/>
            <person name="Kuramae E.E."/>
            <person name="Laigret F."/>
            <person name="Lambais M.R."/>
            <person name="Leite L.C.C."/>
            <person name="Lemos E.G.M."/>
            <person name="Lemos M.V.F."/>
            <person name="Lopes S.A."/>
            <person name="Lopes C.R."/>
            <person name="Machado J.A."/>
            <person name="Machado M.A."/>
            <person name="Madeira A.M.B.N."/>
            <person name="Madeira H.M.F."/>
            <person name="Marino C.L."/>
            <person name="Marques M.V."/>
            <person name="Martins E.A.L."/>
            <person name="Martins E.M.F."/>
            <person name="Matsukuma A.Y."/>
            <person name="Menck C.F.M."/>
            <person name="Miracca E.C."/>
            <person name="Miyaki C.Y."/>
            <person name="Monteiro-Vitorello C.B."/>
            <person name="Moon D.H."/>
            <person name="Nagai M.A."/>
            <person name="Nascimento A.L.T.O."/>
            <person name="Netto L.E.S."/>
            <person name="Nhani A. Jr."/>
            <person name="Nobrega F.G."/>
            <person name="Nunes L.R."/>
            <person name="Oliveira M.A."/>
            <person name="de Oliveira M.C."/>
            <person name="de Oliveira R.C."/>
            <person name="Palmieri D.A."/>
            <person name="Paris A."/>
            <person name="Peixoto B.R."/>
            <person name="Pereira G.A.G."/>
            <person name="Pereira H.A. Jr."/>
            <person name="Pesquero J.B."/>
            <person name="Quaggio R.B."/>
            <person name="Roberto P.G."/>
            <person name="Rodrigues V."/>
            <person name="de Rosa A.J.M."/>
            <person name="de Rosa V.E. Jr."/>
            <person name="de Sa R.G."/>
            <person name="Santelli R.V."/>
            <person name="Sawasaki H.E."/>
            <person name="da Silva A.C.R."/>
            <person name="da Silva A.M."/>
            <person name="da Silva F.R."/>
            <person name="Silva W.A. Jr."/>
            <person name="da Silveira J.F."/>
            <person name="Silvestri M.L.Z."/>
            <person name="Siqueira W.J."/>
            <person name="de Souza A.A."/>
            <person name="de Souza A.P."/>
            <person name="Terenzi M.F."/>
            <person name="Truffi D."/>
            <person name="Tsai S.M."/>
            <person name="Tsuhako M.H."/>
            <person name="Vallada H."/>
            <person name="Van Sluys M.A."/>
            <person name="Verjovski-Almeida S."/>
            <person name="Vettore A.L."/>
            <person name="Zago M.A."/>
            <person name="Zatz M."/>
            <person name="Meidanis J."/>
            <person name="Setubal J.C."/>
        </authorList>
    </citation>
    <scope>NUCLEOTIDE SEQUENCE [LARGE SCALE GENOMIC DNA]</scope>
    <source>
        <strain>9a5c</strain>
    </source>
</reference>
<dbReference type="EC" id="2.7.7.6" evidence="1"/>
<dbReference type="EMBL" id="AE003849">
    <property type="protein sequence ID" value="AAF85430.1"/>
    <property type="molecule type" value="Genomic_DNA"/>
</dbReference>
<dbReference type="PIR" id="E82533">
    <property type="entry name" value="E82533"/>
</dbReference>
<dbReference type="SMR" id="Q9PA86"/>
<dbReference type="STRING" id="160492.XF_2633"/>
<dbReference type="KEGG" id="xfa:XF_2633"/>
<dbReference type="eggNOG" id="COG0085">
    <property type="taxonomic scope" value="Bacteria"/>
</dbReference>
<dbReference type="HOGENOM" id="CLU_000524_4_0_6"/>
<dbReference type="Proteomes" id="UP000000812">
    <property type="component" value="Chromosome"/>
</dbReference>
<dbReference type="GO" id="GO:0000428">
    <property type="term" value="C:DNA-directed RNA polymerase complex"/>
    <property type="evidence" value="ECO:0007669"/>
    <property type="project" value="UniProtKB-KW"/>
</dbReference>
<dbReference type="GO" id="GO:0003677">
    <property type="term" value="F:DNA binding"/>
    <property type="evidence" value="ECO:0007669"/>
    <property type="project" value="UniProtKB-UniRule"/>
</dbReference>
<dbReference type="GO" id="GO:0003899">
    <property type="term" value="F:DNA-directed RNA polymerase activity"/>
    <property type="evidence" value="ECO:0007669"/>
    <property type="project" value="UniProtKB-UniRule"/>
</dbReference>
<dbReference type="GO" id="GO:0032549">
    <property type="term" value="F:ribonucleoside binding"/>
    <property type="evidence" value="ECO:0007669"/>
    <property type="project" value="InterPro"/>
</dbReference>
<dbReference type="GO" id="GO:0006351">
    <property type="term" value="P:DNA-templated transcription"/>
    <property type="evidence" value="ECO:0007669"/>
    <property type="project" value="UniProtKB-UniRule"/>
</dbReference>
<dbReference type="CDD" id="cd00653">
    <property type="entry name" value="RNA_pol_B_RPB2"/>
    <property type="match status" value="1"/>
</dbReference>
<dbReference type="FunFam" id="2.40.50.100:FF:000006">
    <property type="entry name" value="DNA-directed RNA polymerase subunit beta"/>
    <property type="match status" value="1"/>
</dbReference>
<dbReference type="FunFam" id="2.40.50.150:FF:000001">
    <property type="entry name" value="DNA-directed RNA polymerase subunit beta"/>
    <property type="match status" value="1"/>
</dbReference>
<dbReference type="FunFam" id="3.90.1800.10:FF:000001">
    <property type="entry name" value="DNA-directed RNA polymerase subunit beta"/>
    <property type="match status" value="1"/>
</dbReference>
<dbReference type="Gene3D" id="2.40.50.100">
    <property type="match status" value="1"/>
</dbReference>
<dbReference type="Gene3D" id="2.40.50.150">
    <property type="match status" value="1"/>
</dbReference>
<dbReference type="Gene3D" id="3.90.1100.10">
    <property type="match status" value="3"/>
</dbReference>
<dbReference type="Gene3D" id="2.40.270.10">
    <property type="entry name" value="DNA-directed RNA polymerase, subunit 2, domain 6"/>
    <property type="match status" value="1"/>
</dbReference>
<dbReference type="Gene3D" id="3.90.1800.10">
    <property type="entry name" value="RNA polymerase alpha subunit dimerisation domain"/>
    <property type="match status" value="1"/>
</dbReference>
<dbReference type="Gene3D" id="3.90.1110.10">
    <property type="entry name" value="RNA polymerase Rpb2, domain 2"/>
    <property type="match status" value="1"/>
</dbReference>
<dbReference type="HAMAP" id="MF_01321">
    <property type="entry name" value="RNApol_bact_RpoB"/>
    <property type="match status" value="1"/>
</dbReference>
<dbReference type="InterPro" id="IPR019462">
    <property type="entry name" value="DNA-dir_RNA_pol_bsu_external_1"/>
</dbReference>
<dbReference type="InterPro" id="IPR015712">
    <property type="entry name" value="DNA-dir_RNA_pol_su2"/>
</dbReference>
<dbReference type="InterPro" id="IPR007120">
    <property type="entry name" value="DNA-dir_RNAP_su2_dom"/>
</dbReference>
<dbReference type="InterPro" id="IPR037033">
    <property type="entry name" value="DNA-dir_RNAP_su2_hyb_sf"/>
</dbReference>
<dbReference type="InterPro" id="IPR010243">
    <property type="entry name" value="RNA_pol_bsu_bac"/>
</dbReference>
<dbReference type="InterPro" id="IPR007121">
    <property type="entry name" value="RNA_pol_bsu_CS"/>
</dbReference>
<dbReference type="InterPro" id="IPR007644">
    <property type="entry name" value="RNA_pol_bsu_protrusion"/>
</dbReference>
<dbReference type="InterPro" id="IPR007642">
    <property type="entry name" value="RNA_pol_Rpb2_2"/>
</dbReference>
<dbReference type="InterPro" id="IPR037034">
    <property type="entry name" value="RNA_pol_Rpb2_2_sf"/>
</dbReference>
<dbReference type="InterPro" id="IPR007645">
    <property type="entry name" value="RNA_pol_Rpb2_3"/>
</dbReference>
<dbReference type="InterPro" id="IPR007641">
    <property type="entry name" value="RNA_pol_Rpb2_7"/>
</dbReference>
<dbReference type="InterPro" id="IPR014724">
    <property type="entry name" value="RNA_pol_RPB2_OB-fold"/>
</dbReference>
<dbReference type="NCBIfam" id="NF001616">
    <property type="entry name" value="PRK00405.1"/>
    <property type="match status" value="1"/>
</dbReference>
<dbReference type="NCBIfam" id="TIGR02013">
    <property type="entry name" value="rpoB"/>
    <property type="match status" value="1"/>
</dbReference>
<dbReference type="PANTHER" id="PTHR20856">
    <property type="entry name" value="DNA-DIRECTED RNA POLYMERASE I SUBUNIT 2"/>
    <property type="match status" value="1"/>
</dbReference>
<dbReference type="Pfam" id="PF04563">
    <property type="entry name" value="RNA_pol_Rpb2_1"/>
    <property type="match status" value="1"/>
</dbReference>
<dbReference type="Pfam" id="PF04561">
    <property type="entry name" value="RNA_pol_Rpb2_2"/>
    <property type="match status" value="2"/>
</dbReference>
<dbReference type="Pfam" id="PF04565">
    <property type="entry name" value="RNA_pol_Rpb2_3"/>
    <property type="match status" value="1"/>
</dbReference>
<dbReference type="Pfam" id="PF10385">
    <property type="entry name" value="RNA_pol_Rpb2_45"/>
    <property type="match status" value="1"/>
</dbReference>
<dbReference type="Pfam" id="PF00562">
    <property type="entry name" value="RNA_pol_Rpb2_6"/>
    <property type="match status" value="1"/>
</dbReference>
<dbReference type="Pfam" id="PF04560">
    <property type="entry name" value="RNA_pol_Rpb2_7"/>
    <property type="match status" value="1"/>
</dbReference>
<dbReference type="SUPFAM" id="SSF64484">
    <property type="entry name" value="beta and beta-prime subunits of DNA dependent RNA-polymerase"/>
    <property type="match status" value="1"/>
</dbReference>
<dbReference type="PROSITE" id="PS01166">
    <property type="entry name" value="RNA_POL_BETA"/>
    <property type="match status" value="1"/>
</dbReference>
<protein>
    <recommendedName>
        <fullName evidence="1">DNA-directed RNA polymerase subunit beta</fullName>
        <shortName evidence="1">RNAP subunit beta</shortName>
        <ecNumber evidence="1">2.7.7.6</ecNumber>
    </recommendedName>
    <alternativeName>
        <fullName evidence="1">RNA polymerase subunit beta</fullName>
    </alternativeName>
    <alternativeName>
        <fullName evidence="1">Transcriptase subunit beta</fullName>
    </alternativeName>
</protein>
<keyword id="KW-0240">DNA-directed RNA polymerase</keyword>
<keyword id="KW-0548">Nucleotidyltransferase</keyword>
<keyword id="KW-0804">Transcription</keyword>
<keyword id="KW-0808">Transferase</keyword>
<evidence type="ECO:0000255" key="1">
    <source>
        <dbReference type="HAMAP-Rule" id="MF_01321"/>
    </source>
</evidence>
<name>RPOB_XYLFA</name>
<comment type="function">
    <text evidence="1">DNA-dependent RNA polymerase catalyzes the transcription of DNA into RNA using the four ribonucleoside triphosphates as substrates.</text>
</comment>
<comment type="catalytic activity">
    <reaction evidence="1">
        <text>RNA(n) + a ribonucleoside 5'-triphosphate = RNA(n+1) + diphosphate</text>
        <dbReference type="Rhea" id="RHEA:21248"/>
        <dbReference type="Rhea" id="RHEA-COMP:14527"/>
        <dbReference type="Rhea" id="RHEA-COMP:17342"/>
        <dbReference type="ChEBI" id="CHEBI:33019"/>
        <dbReference type="ChEBI" id="CHEBI:61557"/>
        <dbReference type="ChEBI" id="CHEBI:140395"/>
        <dbReference type="EC" id="2.7.7.6"/>
    </reaction>
</comment>
<comment type="subunit">
    <text evidence="1">The RNAP catalytic core consists of 2 alpha, 1 beta, 1 beta' and 1 omega subunit. When a sigma factor is associated with the core the holoenzyme is formed, which can initiate transcription.</text>
</comment>
<comment type="similarity">
    <text evidence="1">Belongs to the RNA polymerase beta chain family.</text>
</comment>
<gene>
    <name evidence="1" type="primary">rpoB</name>
    <name type="ordered locus">XF_2633</name>
</gene>
<organism>
    <name type="scientific">Xylella fastidiosa (strain 9a5c)</name>
    <dbReference type="NCBI Taxonomy" id="160492"/>
    <lineage>
        <taxon>Bacteria</taxon>
        <taxon>Pseudomonadati</taxon>
        <taxon>Pseudomonadota</taxon>
        <taxon>Gammaproteobacteria</taxon>
        <taxon>Lysobacterales</taxon>
        <taxon>Lysobacteraceae</taxon>
        <taxon>Xylella</taxon>
    </lineage>
</organism>